<accession>A1JPN6</accession>
<reference key="1">
    <citation type="journal article" date="2006" name="PLoS Genet.">
        <title>The complete genome sequence and comparative genome analysis of the high pathogenicity Yersinia enterocolitica strain 8081.</title>
        <authorList>
            <person name="Thomson N.R."/>
            <person name="Howard S."/>
            <person name="Wren B.W."/>
            <person name="Holden M.T.G."/>
            <person name="Crossman L."/>
            <person name="Challis G.L."/>
            <person name="Churcher C."/>
            <person name="Mungall K."/>
            <person name="Brooks K."/>
            <person name="Chillingworth T."/>
            <person name="Feltwell T."/>
            <person name="Abdellah Z."/>
            <person name="Hauser H."/>
            <person name="Jagels K."/>
            <person name="Maddison M."/>
            <person name="Moule S."/>
            <person name="Sanders M."/>
            <person name="Whitehead S."/>
            <person name="Quail M.A."/>
            <person name="Dougan G."/>
            <person name="Parkhill J."/>
            <person name="Prentice M.B."/>
        </authorList>
    </citation>
    <scope>NUCLEOTIDE SEQUENCE [LARGE SCALE GENOMIC DNA]</scope>
    <source>
        <strain>NCTC 13174 / 8081</strain>
    </source>
</reference>
<gene>
    <name evidence="1" type="primary">gcvT</name>
    <name type="ordered locus">YE3393</name>
</gene>
<proteinExistence type="inferred from homology"/>
<name>GCST_YERE8</name>
<dbReference type="EC" id="2.1.2.10" evidence="1"/>
<dbReference type="EMBL" id="AM286415">
    <property type="protein sequence ID" value="CAL13419.1"/>
    <property type="molecule type" value="Genomic_DNA"/>
</dbReference>
<dbReference type="RefSeq" id="WP_011817029.1">
    <property type="nucleotide sequence ID" value="NC_008800.1"/>
</dbReference>
<dbReference type="RefSeq" id="YP_001007562.1">
    <property type="nucleotide sequence ID" value="NC_008800.1"/>
</dbReference>
<dbReference type="SMR" id="A1JPN6"/>
<dbReference type="KEGG" id="yen:YE3393"/>
<dbReference type="PATRIC" id="fig|393305.7.peg.3603"/>
<dbReference type="eggNOG" id="COG0404">
    <property type="taxonomic scope" value="Bacteria"/>
</dbReference>
<dbReference type="HOGENOM" id="CLU_007884_10_2_6"/>
<dbReference type="OrthoDB" id="9774591at2"/>
<dbReference type="Proteomes" id="UP000000642">
    <property type="component" value="Chromosome"/>
</dbReference>
<dbReference type="GO" id="GO:0005829">
    <property type="term" value="C:cytosol"/>
    <property type="evidence" value="ECO:0007669"/>
    <property type="project" value="TreeGrafter"/>
</dbReference>
<dbReference type="GO" id="GO:0005960">
    <property type="term" value="C:glycine cleavage complex"/>
    <property type="evidence" value="ECO:0007669"/>
    <property type="project" value="InterPro"/>
</dbReference>
<dbReference type="GO" id="GO:0004047">
    <property type="term" value="F:aminomethyltransferase activity"/>
    <property type="evidence" value="ECO:0007669"/>
    <property type="project" value="UniProtKB-UniRule"/>
</dbReference>
<dbReference type="GO" id="GO:0008483">
    <property type="term" value="F:transaminase activity"/>
    <property type="evidence" value="ECO:0007669"/>
    <property type="project" value="UniProtKB-KW"/>
</dbReference>
<dbReference type="GO" id="GO:0019464">
    <property type="term" value="P:glycine decarboxylation via glycine cleavage system"/>
    <property type="evidence" value="ECO:0007669"/>
    <property type="project" value="UniProtKB-UniRule"/>
</dbReference>
<dbReference type="FunFam" id="2.40.30.110:FF:000001">
    <property type="entry name" value="Aminomethyltransferase"/>
    <property type="match status" value="1"/>
</dbReference>
<dbReference type="FunFam" id="3.30.70.1400:FF:000001">
    <property type="entry name" value="Aminomethyltransferase"/>
    <property type="match status" value="1"/>
</dbReference>
<dbReference type="FunFam" id="4.10.1250.10:FF:000001">
    <property type="entry name" value="Aminomethyltransferase"/>
    <property type="match status" value="1"/>
</dbReference>
<dbReference type="Gene3D" id="2.40.30.110">
    <property type="entry name" value="Aminomethyltransferase beta-barrel domains"/>
    <property type="match status" value="1"/>
</dbReference>
<dbReference type="Gene3D" id="3.30.70.1400">
    <property type="entry name" value="Aminomethyltransferase beta-barrel domains"/>
    <property type="match status" value="1"/>
</dbReference>
<dbReference type="Gene3D" id="4.10.1250.10">
    <property type="entry name" value="Aminomethyltransferase fragment"/>
    <property type="match status" value="1"/>
</dbReference>
<dbReference type="Gene3D" id="3.30.1360.120">
    <property type="entry name" value="Probable tRNA modification gtpase trme, domain 1"/>
    <property type="match status" value="1"/>
</dbReference>
<dbReference type="HAMAP" id="MF_00259">
    <property type="entry name" value="GcvT"/>
    <property type="match status" value="1"/>
</dbReference>
<dbReference type="InterPro" id="IPR006223">
    <property type="entry name" value="GCS_T"/>
</dbReference>
<dbReference type="InterPro" id="IPR022903">
    <property type="entry name" value="GCS_T_bac"/>
</dbReference>
<dbReference type="InterPro" id="IPR013977">
    <property type="entry name" value="GCST_C"/>
</dbReference>
<dbReference type="InterPro" id="IPR006222">
    <property type="entry name" value="GCV_T_N"/>
</dbReference>
<dbReference type="InterPro" id="IPR028896">
    <property type="entry name" value="GcvT/YgfZ/DmdA"/>
</dbReference>
<dbReference type="InterPro" id="IPR029043">
    <property type="entry name" value="GcvT/YgfZ_C"/>
</dbReference>
<dbReference type="InterPro" id="IPR027266">
    <property type="entry name" value="TrmE/GcvT_dom1"/>
</dbReference>
<dbReference type="NCBIfam" id="TIGR00528">
    <property type="entry name" value="gcvT"/>
    <property type="match status" value="1"/>
</dbReference>
<dbReference type="NCBIfam" id="NF001567">
    <property type="entry name" value="PRK00389.1"/>
    <property type="match status" value="1"/>
</dbReference>
<dbReference type="PANTHER" id="PTHR43757">
    <property type="entry name" value="AMINOMETHYLTRANSFERASE"/>
    <property type="match status" value="1"/>
</dbReference>
<dbReference type="PANTHER" id="PTHR43757:SF2">
    <property type="entry name" value="AMINOMETHYLTRANSFERASE, MITOCHONDRIAL"/>
    <property type="match status" value="1"/>
</dbReference>
<dbReference type="Pfam" id="PF01571">
    <property type="entry name" value="GCV_T"/>
    <property type="match status" value="1"/>
</dbReference>
<dbReference type="Pfam" id="PF08669">
    <property type="entry name" value="GCV_T_C"/>
    <property type="match status" value="1"/>
</dbReference>
<dbReference type="PIRSF" id="PIRSF006487">
    <property type="entry name" value="GcvT"/>
    <property type="match status" value="1"/>
</dbReference>
<dbReference type="SUPFAM" id="SSF101790">
    <property type="entry name" value="Aminomethyltransferase beta-barrel domain"/>
    <property type="match status" value="1"/>
</dbReference>
<dbReference type="SUPFAM" id="SSF103025">
    <property type="entry name" value="Folate-binding domain"/>
    <property type="match status" value="1"/>
</dbReference>
<protein>
    <recommendedName>
        <fullName evidence="1">Aminomethyltransferase</fullName>
        <ecNumber evidence="1">2.1.2.10</ecNumber>
    </recommendedName>
    <alternativeName>
        <fullName evidence="1">Glycine cleavage system T protein</fullName>
    </alternativeName>
</protein>
<evidence type="ECO:0000255" key="1">
    <source>
        <dbReference type="HAMAP-Rule" id="MF_00259"/>
    </source>
</evidence>
<keyword id="KW-0032">Aminotransferase</keyword>
<keyword id="KW-0808">Transferase</keyword>
<organism>
    <name type="scientific">Yersinia enterocolitica serotype O:8 / biotype 1B (strain NCTC 13174 / 8081)</name>
    <dbReference type="NCBI Taxonomy" id="393305"/>
    <lineage>
        <taxon>Bacteria</taxon>
        <taxon>Pseudomonadati</taxon>
        <taxon>Pseudomonadota</taxon>
        <taxon>Gammaproteobacteria</taxon>
        <taxon>Enterobacterales</taxon>
        <taxon>Yersiniaceae</taxon>
        <taxon>Yersinia</taxon>
    </lineage>
</organism>
<comment type="function">
    <text evidence="1">The glycine cleavage system catalyzes the degradation of glycine.</text>
</comment>
<comment type="catalytic activity">
    <reaction evidence="1">
        <text>N(6)-[(R)-S(8)-aminomethyldihydrolipoyl]-L-lysyl-[protein] + (6S)-5,6,7,8-tetrahydrofolate = N(6)-[(R)-dihydrolipoyl]-L-lysyl-[protein] + (6R)-5,10-methylene-5,6,7,8-tetrahydrofolate + NH4(+)</text>
        <dbReference type="Rhea" id="RHEA:16945"/>
        <dbReference type="Rhea" id="RHEA-COMP:10475"/>
        <dbReference type="Rhea" id="RHEA-COMP:10492"/>
        <dbReference type="ChEBI" id="CHEBI:15636"/>
        <dbReference type="ChEBI" id="CHEBI:28938"/>
        <dbReference type="ChEBI" id="CHEBI:57453"/>
        <dbReference type="ChEBI" id="CHEBI:83100"/>
        <dbReference type="ChEBI" id="CHEBI:83143"/>
        <dbReference type="EC" id="2.1.2.10"/>
    </reaction>
</comment>
<comment type="subunit">
    <text evidence="1">The glycine cleavage system is composed of four proteins: P, T, L and H.</text>
</comment>
<comment type="similarity">
    <text evidence="1">Belongs to the GcvT family.</text>
</comment>
<sequence>MAKQTPLYDQHVACGARMVDFHGWMMPLHYGSQIDEHHIVRQDAGMFDVSHMTIVDLHGARTREFLRYLLANDVAKLTQPGKALYTAMLNASGGVIDDLIVYFLREDYFRLVVNSATREKDLNWIIQHAEPYQVDVTVRDDLALVAVQGPTAQQKVATLLTSEQQQAIAGMKPFFGIQADDLFIATTGYTGEAGYEIALPKERVVEFWQQLLAAGVKPAGLGARDTLRLEAGMNLYGQEMDEGVSPLAANMGWTVAWLPEDRQFIGREALEQQRANGTEQLVGLIMTEKGVLRNELPVHFSDDSGNQHVGVITSGSFSPTLGFSIALARVPAGIGENAVVQIRNREMPVRVTKPGFVRAGKPVAL</sequence>
<feature type="chain" id="PRO_1000047730" description="Aminomethyltransferase">
    <location>
        <begin position="1"/>
        <end position="365"/>
    </location>
</feature>